<name>RIMP_RICM5</name>
<feature type="chain" id="PRO_0000384752" description="Ribosome maturation factor RimP">
    <location>
        <begin position="1"/>
        <end position="161"/>
    </location>
</feature>
<proteinExistence type="inferred from homology"/>
<reference key="1">
    <citation type="journal article" date="2007" name="Genome Res.">
        <title>Lateral gene transfer between obligate intracellular bacteria: evidence from the Rickettsia massiliae genome.</title>
        <authorList>
            <person name="Blanc G."/>
            <person name="Ogata H."/>
            <person name="Robert C."/>
            <person name="Audic S."/>
            <person name="Claverie J.-M."/>
            <person name="Raoult D."/>
        </authorList>
    </citation>
    <scope>NUCLEOTIDE SEQUENCE [LARGE SCALE GENOMIC DNA]</scope>
    <source>
        <strain>Mtu5</strain>
    </source>
</reference>
<dbReference type="EMBL" id="CP000683">
    <property type="protein sequence ID" value="ABV84961.1"/>
    <property type="status" value="ALT_INIT"/>
    <property type="molecule type" value="Genomic_DNA"/>
</dbReference>
<dbReference type="RefSeq" id="WP_014365676.1">
    <property type="nucleotide sequence ID" value="NC_009900.1"/>
</dbReference>
<dbReference type="SMR" id="A8F225"/>
<dbReference type="KEGG" id="rms:RMA_0855"/>
<dbReference type="HOGENOM" id="CLU_070525_0_2_5"/>
<dbReference type="Proteomes" id="UP000001311">
    <property type="component" value="Chromosome"/>
</dbReference>
<dbReference type="GO" id="GO:0005829">
    <property type="term" value="C:cytosol"/>
    <property type="evidence" value="ECO:0007669"/>
    <property type="project" value="TreeGrafter"/>
</dbReference>
<dbReference type="GO" id="GO:0000028">
    <property type="term" value="P:ribosomal small subunit assembly"/>
    <property type="evidence" value="ECO:0007669"/>
    <property type="project" value="TreeGrafter"/>
</dbReference>
<dbReference type="GO" id="GO:0006412">
    <property type="term" value="P:translation"/>
    <property type="evidence" value="ECO:0007669"/>
    <property type="project" value="TreeGrafter"/>
</dbReference>
<dbReference type="CDD" id="cd01734">
    <property type="entry name" value="YlxS_C"/>
    <property type="match status" value="1"/>
</dbReference>
<dbReference type="Gene3D" id="2.30.30.180">
    <property type="entry name" value="Ribosome maturation factor RimP, C-terminal domain"/>
    <property type="match status" value="1"/>
</dbReference>
<dbReference type="Gene3D" id="3.30.300.70">
    <property type="entry name" value="RimP-like superfamily, N-terminal"/>
    <property type="match status" value="1"/>
</dbReference>
<dbReference type="HAMAP" id="MF_01077">
    <property type="entry name" value="RimP"/>
    <property type="match status" value="1"/>
</dbReference>
<dbReference type="InterPro" id="IPR003728">
    <property type="entry name" value="Ribosome_maturation_RimP"/>
</dbReference>
<dbReference type="InterPro" id="IPR028998">
    <property type="entry name" value="RimP_C"/>
</dbReference>
<dbReference type="InterPro" id="IPR036847">
    <property type="entry name" value="RimP_C_sf"/>
</dbReference>
<dbReference type="InterPro" id="IPR028989">
    <property type="entry name" value="RimP_N"/>
</dbReference>
<dbReference type="InterPro" id="IPR035956">
    <property type="entry name" value="RimP_N_sf"/>
</dbReference>
<dbReference type="NCBIfam" id="NF000937">
    <property type="entry name" value="PRK00092.4-3"/>
    <property type="match status" value="1"/>
</dbReference>
<dbReference type="PANTHER" id="PTHR33867">
    <property type="entry name" value="RIBOSOME MATURATION FACTOR RIMP"/>
    <property type="match status" value="1"/>
</dbReference>
<dbReference type="PANTHER" id="PTHR33867:SF1">
    <property type="entry name" value="RIBOSOME MATURATION FACTOR RIMP"/>
    <property type="match status" value="1"/>
</dbReference>
<dbReference type="Pfam" id="PF17384">
    <property type="entry name" value="DUF150_C"/>
    <property type="match status" value="1"/>
</dbReference>
<dbReference type="Pfam" id="PF02576">
    <property type="entry name" value="RimP_N"/>
    <property type="match status" value="1"/>
</dbReference>
<dbReference type="SUPFAM" id="SSF74942">
    <property type="entry name" value="YhbC-like, C-terminal domain"/>
    <property type="match status" value="1"/>
</dbReference>
<dbReference type="SUPFAM" id="SSF75420">
    <property type="entry name" value="YhbC-like, N-terminal domain"/>
    <property type="match status" value="1"/>
</dbReference>
<organism>
    <name type="scientific">Rickettsia massiliae (strain Mtu5)</name>
    <dbReference type="NCBI Taxonomy" id="416276"/>
    <lineage>
        <taxon>Bacteria</taxon>
        <taxon>Pseudomonadati</taxon>
        <taxon>Pseudomonadota</taxon>
        <taxon>Alphaproteobacteria</taxon>
        <taxon>Rickettsiales</taxon>
        <taxon>Rickettsiaceae</taxon>
        <taxon>Rickettsieae</taxon>
        <taxon>Rickettsia</taxon>
        <taxon>spotted fever group</taxon>
    </lineage>
</organism>
<accession>A8F225</accession>
<keyword id="KW-0963">Cytoplasm</keyword>
<keyword id="KW-0690">Ribosome biogenesis</keyword>
<gene>
    <name evidence="1" type="primary">rimP</name>
    <name type="ordered locus">RMA_0855</name>
</gene>
<evidence type="ECO:0000255" key="1">
    <source>
        <dbReference type="HAMAP-Rule" id="MF_01077"/>
    </source>
</evidence>
<evidence type="ECO:0000305" key="2"/>
<comment type="function">
    <text evidence="1">Required for maturation of 30S ribosomal subunits.</text>
</comment>
<comment type="subcellular location">
    <subcellularLocation>
        <location evidence="1">Cytoplasm</location>
    </subcellularLocation>
</comment>
<comment type="similarity">
    <text evidence="1">Belongs to the RimP family.</text>
</comment>
<comment type="sequence caution" evidence="2">
    <conflict type="erroneous initiation">
        <sequence resource="EMBL-CDS" id="ABV84961"/>
    </conflict>
</comment>
<sequence>MQTIEQQITNVIEESLTDMGFELVLVKVKGVNPKVVEILIDSLNGERISVEDCTKASRTISAILDVEDLIEAAYSLEVASSGLERPLVKFENYNRFLEREVKIKLKELLNGKTRYQGKIIKAENNKIYLKCEEQEVLIDYDLIKNANLVLTEEVFKKLLKQ</sequence>
<protein>
    <recommendedName>
        <fullName evidence="1">Ribosome maturation factor RimP</fullName>
    </recommendedName>
</protein>